<dbReference type="EMBL" id="U69127">
    <property type="protein sequence ID" value="AAC50893.1"/>
    <property type="status" value="ALT_FRAME"/>
    <property type="molecule type" value="mRNA"/>
</dbReference>
<dbReference type="EMBL" id="AK295155">
    <property type="protein sequence ID" value="BAG58170.1"/>
    <property type="molecule type" value="mRNA"/>
</dbReference>
<dbReference type="EMBL" id="AL353695">
    <property type="status" value="NOT_ANNOTATED_CDS"/>
    <property type="molecule type" value="Genomic_DNA"/>
</dbReference>
<dbReference type="EMBL" id="AL359092">
    <property type="status" value="NOT_ANNOTATED_CDS"/>
    <property type="molecule type" value="Genomic_DNA"/>
</dbReference>
<dbReference type="EMBL" id="CH471090">
    <property type="protein sequence ID" value="EAW87937.1"/>
    <property type="molecule type" value="Genomic_DNA"/>
</dbReference>
<dbReference type="EMBL" id="BC001325">
    <property type="protein sequence ID" value="AAH01325.1"/>
    <property type="status" value="ALT_FRAME"/>
    <property type="molecule type" value="mRNA"/>
</dbReference>
<dbReference type="EMBL" id="BC007874">
    <property type="protein sequence ID" value="AAH07874.1"/>
    <property type="molecule type" value="mRNA"/>
</dbReference>
<dbReference type="EMBL" id="BC137338">
    <property type="protein sequence ID" value="AAI37339.1"/>
    <property type="molecule type" value="mRNA"/>
</dbReference>
<dbReference type="EMBL" id="BC137340">
    <property type="protein sequence ID" value="AAI37341.1"/>
    <property type="molecule type" value="mRNA"/>
</dbReference>
<dbReference type="CCDS" id="CCDS43893.1">
    <molecule id="Q96I24-1"/>
</dbReference>
<dbReference type="RefSeq" id="NP_003925.1">
    <molecule id="Q96I24-1"/>
    <property type="nucleotide sequence ID" value="NM_003934.2"/>
</dbReference>
<dbReference type="SMR" id="Q96I24"/>
<dbReference type="BioGRID" id="114451">
    <property type="interactions" value="308"/>
</dbReference>
<dbReference type="DIP" id="DIP-50124N"/>
<dbReference type="FunCoup" id="Q96I24">
    <property type="interactions" value="5395"/>
</dbReference>
<dbReference type="IntAct" id="Q96I24">
    <property type="interactions" value="97"/>
</dbReference>
<dbReference type="MINT" id="Q96I24"/>
<dbReference type="STRING" id="9606.ENSP00000318177"/>
<dbReference type="GlyCosmos" id="Q96I24">
    <property type="glycosylation" value="4 sites, 1 glycan"/>
</dbReference>
<dbReference type="GlyGen" id="Q96I24">
    <property type="glycosylation" value="8 sites, 1 O-linked glycan (8 sites)"/>
</dbReference>
<dbReference type="iPTMnet" id="Q96I24"/>
<dbReference type="MetOSite" id="Q96I24"/>
<dbReference type="PhosphoSitePlus" id="Q96I24"/>
<dbReference type="SwissPalm" id="Q96I24"/>
<dbReference type="BioMuta" id="FUBP3"/>
<dbReference type="DMDM" id="37078499"/>
<dbReference type="REPRODUCTION-2DPAGE" id="IPI00377261"/>
<dbReference type="jPOST" id="Q96I24"/>
<dbReference type="MassIVE" id="Q96I24"/>
<dbReference type="PaxDb" id="9606-ENSP00000318177"/>
<dbReference type="PeptideAtlas" id="Q96I24"/>
<dbReference type="ProteomicsDB" id="76805">
    <molecule id="Q96I24-1"/>
</dbReference>
<dbReference type="ProteomicsDB" id="76806">
    <molecule id="Q96I24-2"/>
</dbReference>
<dbReference type="Pumba" id="Q96I24"/>
<dbReference type="Antibodypedia" id="31511">
    <property type="antibodies" value="318 antibodies from 33 providers"/>
</dbReference>
<dbReference type="DNASU" id="8939"/>
<dbReference type="Ensembl" id="ENST00000319725.10">
    <molecule id="Q96I24-1"/>
    <property type="protein sequence ID" value="ENSP00000318177.9"/>
    <property type="gene ID" value="ENSG00000107164.17"/>
</dbReference>
<dbReference type="GeneID" id="8939"/>
<dbReference type="KEGG" id="hsa:8939"/>
<dbReference type="MANE-Select" id="ENST00000319725.10">
    <property type="protein sequence ID" value="ENSP00000318177.9"/>
    <property type="RefSeq nucleotide sequence ID" value="NM_003934.2"/>
    <property type="RefSeq protein sequence ID" value="NP_003925.1"/>
</dbReference>
<dbReference type="UCSC" id="uc004bzr.2">
    <molecule id="Q96I24-1"/>
    <property type="organism name" value="human"/>
</dbReference>
<dbReference type="AGR" id="HGNC:4005"/>
<dbReference type="CTD" id="8939"/>
<dbReference type="DisGeNET" id="8939"/>
<dbReference type="GeneCards" id="FUBP3"/>
<dbReference type="HGNC" id="HGNC:4005">
    <property type="gene designation" value="FUBP3"/>
</dbReference>
<dbReference type="HPA" id="ENSG00000107164">
    <property type="expression patterns" value="Low tissue specificity"/>
</dbReference>
<dbReference type="MIM" id="603536">
    <property type="type" value="gene"/>
</dbReference>
<dbReference type="neXtProt" id="NX_Q96I24"/>
<dbReference type="OpenTargets" id="ENSG00000107164"/>
<dbReference type="PharmGKB" id="PA28421"/>
<dbReference type="VEuPathDB" id="HostDB:ENSG00000107164"/>
<dbReference type="eggNOG" id="KOG1676">
    <property type="taxonomic scope" value="Eukaryota"/>
</dbReference>
<dbReference type="GeneTree" id="ENSGT00940000156744"/>
<dbReference type="HOGENOM" id="CLU_014285_1_1_1"/>
<dbReference type="InParanoid" id="Q96I24"/>
<dbReference type="OMA" id="HNDVDSN"/>
<dbReference type="OrthoDB" id="5204190at2759"/>
<dbReference type="PAN-GO" id="Q96I24">
    <property type="GO annotations" value="4 GO annotations based on evolutionary models"/>
</dbReference>
<dbReference type="PhylomeDB" id="Q96I24"/>
<dbReference type="TreeFam" id="TF313654"/>
<dbReference type="PathwayCommons" id="Q96I24"/>
<dbReference type="SignaLink" id="Q96I24"/>
<dbReference type="BioGRID-ORCS" id="8939">
    <property type="hits" value="13 hits in 1157 CRISPR screens"/>
</dbReference>
<dbReference type="CD-CODE" id="232F8A39">
    <property type="entry name" value="P-body"/>
</dbReference>
<dbReference type="CD-CODE" id="DEE660B4">
    <property type="entry name" value="Stress granule"/>
</dbReference>
<dbReference type="ChiTaRS" id="FUBP3">
    <property type="organism name" value="human"/>
</dbReference>
<dbReference type="GenomeRNAi" id="8939"/>
<dbReference type="Pharos" id="Q96I24">
    <property type="development level" value="Tbio"/>
</dbReference>
<dbReference type="PRO" id="PR:Q96I24"/>
<dbReference type="Proteomes" id="UP000005640">
    <property type="component" value="Chromosome 9"/>
</dbReference>
<dbReference type="RNAct" id="Q96I24">
    <property type="molecule type" value="protein"/>
</dbReference>
<dbReference type="Bgee" id="ENSG00000107164">
    <property type="expression patterns" value="Expressed in body of uterus and 200 other cell types or tissues"/>
</dbReference>
<dbReference type="ExpressionAtlas" id="Q96I24">
    <property type="expression patterns" value="baseline and differential"/>
</dbReference>
<dbReference type="GO" id="GO:0005737">
    <property type="term" value="C:cytoplasm"/>
    <property type="evidence" value="ECO:0000314"/>
    <property type="project" value="UniProtKB"/>
</dbReference>
<dbReference type="GO" id="GO:0043198">
    <property type="term" value="C:dendritic shaft"/>
    <property type="evidence" value="ECO:0007669"/>
    <property type="project" value="Ensembl"/>
</dbReference>
<dbReference type="GO" id="GO:0016020">
    <property type="term" value="C:membrane"/>
    <property type="evidence" value="ECO:0007005"/>
    <property type="project" value="UniProtKB"/>
</dbReference>
<dbReference type="GO" id="GO:0043025">
    <property type="term" value="C:neuronal cell body"/>
    <property type="evidence" value="ECO:0007669"/>
    <property type="project" value="Ensembl"/>
</dbReference>
<dbReference type="GO" id="GO:0005654">
    <property type="term" value="C:nucleoplasm"/>
    <property type="evidence" value="ECO:0007669"/>
    <property type="project" value="Ensembl"/>
</dbReference>
<dbReference type="GO" id="GO:0005634">
    <property type="term" value="C:nucleus"/>
    <property type="evidence" value="ECO:0000314"/>
    <property type="project" value="UniProtKB"/>
</dbReference>
<dbReference type="GO" id="GO:0005840">
    <property type="term" value="C:ribosome"/>
    <property type="evidence" value="ECO:0007669"/>
    <property type="project" value="Ensembl"/>
</dbReference>
<dbReference type="GO" id="GO:0003729">
    <property type="term" value="F:mRNA binding"/>
    <property type="evidence" value="ECO:0000318"/>
    <property type="project" value="GO_Central"/>
</dbReference>
<dbReference type="GO" id="GO:0003723">
    <property type="term" value="F:RNA binding"/>
    <property type="evidence" value="ECO:0007005"/>
    <property type="project" value="UniProtKB"/>
</dbReference>
<dbReference type="GO" id="GO:0003697">
    <property type="term" value="F:single-stranded DNA binding"/>
    <property type="evidence" value="ECO:0000314"/>
    <property type="project" value="MGI"/>
</dbReference>
<dbReference type="GO" id="GO:0006351">
    <property type="term" value="P:DNA-templated transcription"/>
    <property type="evidence" value="ECO:0000314"/>
    <property type="project" value="UniProtKB"/>
</dbReference>
<dbReference type="GO" id="GO:0008298">
    <property type="term" value="P:intracellular mRNA localization"/>
    <property type="evidence" value="ECO:0007669"/>
    <property type="project" value="Ensembl"/>
</dbReference>
<dbReference type="GO" id="GO:0045893">
    <property type="term" value="P:positive regulation of DNA-templated transcription"/>
    <property type="evidence" value="ECO:0000314"/>
    <property type="project" value="UniProtKB"/>
</dbReference>
<dbReference type="GO" id="GO:0010628">
    <property type="term" value="P:positive regulation of gene expression"/>
    <property type="evidence" value="ECO:0000314"/>
    <property type="project" value="UniProtKB"/>
</dbReference>
<dbReference type="GO" id="GO:0045944">
    <property type="term" value="P:positive regulation of transcription by RNA polymerase II"/>
    <property type="evidence" value="ECO:0000314"/>
    <property type="project" value="MGI"/>
</dbReference>
<dbReference type="GO" id="GO:0006357">
    <property type="term" value="P:regulation of transcription by RNA polymerase II"/>
    <property type="evidence" value="ECO:0000318"/>
    <property type="project" value="GO_Central"/>
</dbReference>
<dbReference type="CDD" id="cd22480">
    <property type="entry name" value="KH-I_FUBP3_rpt1"/>
    <property type="match status" value="1"/>
</dbReference>
<dbReference type="CDD" id="cd22483">
    <property type="entry name" value="KH-I_FUBP3_rpt2"/>
    <property type="match status" value="1"/>
</dbReference>
<dbReference type="CDD" id="cd22486">
    <property type="entry name" value="KH-I_FUBP3_rpt3"/>
    <property type="match status" value="1"/>
</dbReference>
<dbReference type="CDD" id="cd22489">
    <property type="entry name" value="KH-I_FUBP3_rpt4"/>
    <property type="match status" value="1"/>
</dbReference>
<dbReference type="FunFam" id="3.30.1370.10:FF:000060">
    <property type="entry name" value="Far upstream element binding protein 3"/>
    <property type="match status" value="1"/>
</dbReference>
<dbReference type="FunFam" id="3.30.1370.10:FF:000007">
    <property type="entry name" value="far upstream element-binding protein 1 isoform X1"/>
    <property type="match status" value="1"/>
</dbReference>
<dbReference type="FunFam" id="3.30.1370.10:FF:000008">
    <property type="entry name" value="far upstream element-binding protein 1 isoform X1"/>
    <property type="match status" value="1"/>
</dbReference>
<dbReference type="FunFam" id="3.30.1370.10:FF:000010">
    <property type="entry name" value="far upstream element-binding protein 1 isoform X1"/>
    <property type="match status" value="1"/>
</dbReference>
<dbReference type="Gene3D" id="3.30.1370.10">
    <property type="entry name" value="K Homology domain, type 1"/>
    <property type="match status" value="4"/>
</dbReference>
<dbReference type="InterPro" id="IPR004087">
    <property type="entry name" value="KH_dom"/>
</dbReference>
<dbReference type="InterPro" id="IPR004088">
    <property type="entry name" value="KH_dom_type_1"/>
</dbReference>
<dbReference type="InterPro" id="IPR036612">
    <property type="entry name" value="KH_dom_type_1_sf"/>
</dbReference>
<dbReference type="PANTHER" id="PTHR10288">
    <property type="entry name" value="KH DOMAIN CONTAINING RNA BINDING PROTEIN"/>
    <property type="match status" value="1"/>
</dbReference>
<dbReference type="Pfam" id="PF00013">
    <property type="entry name" value="KH_1"/>
    <property type="match status" value="4"/>
</dbReference>
<dbReference type="SMART" id="SM00322">
    <property type="entry name" value="KH"/>
    <property type="match status" value="4"/>
</dbReference>
<dbReference type="SUPFAM" id="SSF54791">
    <property type="entry name" value="Eukaryotic type KH-domain (KH-domain type I)"/>
    <property type="match status" value="4"/>
</dbReference>
<dbReference type="PROSITE" id="PS50084">
    <property type="entry name" value="KH_TYPE_1"/>
    <property type="match status" value="4"/>
</dbReference>
<evidence type="ECO:0000255" key="1">
    <source>
        <dbReference type="PROSITE-ProRule" id="PRU00117"/>
    </source>
</evidence>
<evidence type="ECO:0000256" key="2">
    <source>
        <dbReference type="SAM" id="MobiDB-lite"/>
    </source>
</evidence>
<evidence type="ECO:0000269" key="3">
    <source ref="6"/>
</evidence>
<evidence type="ECO:0000303" key="4">
    <source>
    </source>
</evidence>
<evidence type="ECO:0000305" key="5"/>
<evidence type="ECO:0007744" key="6">
    <source>
    </source>
</evidence>
<evidence type="ECO:0007744" key="7">
    <source>
    </source>
</evidence>
<evidence type="ECO:0007744" key="8">
    <source>
    </source>
</evidence>
<evidence type="ECO:0007744" key="9">
    <source>
    </source>
</evidence>
<evidence type="ECO:0007744" key="10">
    <source>
    </source>
</evidence>
<evidence type="ECO:0007744" key="11">
    <source>
    </source>
</evidence>
<evidence type="ECO:0007744" key="12">
    <source>
    </source>
</evidence>
<evidence type="ECO:0007744" key="13">
    <source>
    </source>
</evidence>
<evidence type="ECO:0007744" key="14">
    <source>
    </source>
</evidence>
<evidence type="ECO:0007744" key="15">
    <source>
    </source>
</evidence>
<organism>
    <name type="scientific">Homo sapiens</name>
    <name type="common">Human</name>
    <dbReference type="NCBI Taxonomy" id="9606"/>
    <lineage>
        <taxon>Eukaryota</taxon>
        <taxon>Metazoa</taxon>
        <taxon>Chordata</taxon>
        <taxon>Craniata</taxon>
        <taxon>Vertebrata</taxon>
        <taxon>Euteleostomi</taxon>
        <taxon>Mammalia</taxon>
        <taxon>Eutheria</taxon>
        <taxon>Euarchontoglires</taxon>
        <taxon>Primates</taxon>
        <taxon>Haplorrhini</taxon>
        <taxon>Catarrhini</taxon>
        <taxon>Hominidae</taxon>
        <taxon>Homo</taxon>
    </lineage>
</organism>
<feature type="initiator methionine" description="Removed" evidence="3 8 11">
    <location>
        <position position="1"/>
    </location>
</feature>
<feature type="chain" id="PRO_0000050140" description="Far upstream element-binding protein 3">
    <location>
        <begin position="2"/>
        <end position="572"/>
    </location>
</feature>
<feature type="domain" description="KH 1" evidence="1">
    <location>
        <begin position="77"/>
        <end position="141"/>
    </location>
</feature>
<feature type="domain" description="KH 2" evidence="1">
    <location>
        <begin position="162"/>
        <end position="228"/>
    </location>
</feature>
<feature type="domain" description="KH 3" evidence="1">
    <location>
        <begin position="253"/>
        <end position="317"/>
    </location>
</feature>
<feature type="domain" description="KH 4" evidence="1">
    <location>
        <begin position="354"/>
        <end position="421"/>
    </location>
</feature>
<feature type="region of interest" description="Disordered" evidence="2">
    <location>
        <begin position="426"/>
        <end position="521"/>
    </location>
</feature>
<feature type="compositionally biased region" description="Low complexity" evidence="2">
    <location>
        <begin position="496"/>
        <end position="514"/>
    </location>
</feature>
<feature type="modified residue" description="N-acetylalanine" evidence="3 8 11">
    <location>
        <position position="2"/>
    </location>
</feature>
<feature type="modified residue" description="Phosphothreonine" evidence="10 12">
    <location>
        <position position="76"/>
    </location>
</feature>
<feature type="modified residue" description="Phosphoserine" evidence="7 10 12 13">
    <location>
        <position position="296"/>
    </location>
</feature>
<feature type="modified residue" description="Phosphoserine" evidence="10">
    <location>
        <position position="539"/>
    </location>
</feature>
<feature type="modified residue" description="Phosphoserine" evidence="6 9 10 12">
    <location>
        <position position="569"/>
    </location>
</feature>
<feature type="cross-link" description="Glycyl lysine isopeptide (Lys-Gly) (interchain with G-Cter in SUMO2)" evidence="14 15">
    <location>
        <position position="15"/>
    </location>
</feature>
<feature type="cross-link" description="Glycyl lysine isopeptide (Lys-Gly) (interchain with G-Cter in SUMO2)" evidence="15">
    <location>
        <position position="57"/>
    </location>
</feature>
<feature type="splice variant" id="VSP_008323" description="In isoform 2." evidence="4">
    <original>MAELVQGQSAPVGMKAEGFVDALHRVRQIAAKIDSIPHLNNSTPLVDPSVYGYGVQKRPLDDGV</original>
    <variation>MPPI</variation>
    <location>
        <begin position="1"/>
        <end position="64"/>
    </location>
</feature>
<feature type="splice variant" id="VSP_008324" description="In isoform 2." evidence="4">
    <location>
        <begin position="298"/>
        <end position="548"/>
    </location>
</feature>
<feature type="sequence conflict" description="In Ref. 1; AAC50893." evidence="5" ref="1">
    <original>V</original>
    <variation>D</variation>
    <location>
        <position position="72"/>
    </location>
</feature>
<protein>
    <recommendedName>
        <fullName>Far upstream element-binding protein 3</fullName>
        <shortName>FUSE-binding protein 3</shortName>
    </recommendedName>
</protein>
<gene>
    <name type="primary">FUBP3</name>
    <name type="synonym">FBP3</name>
</gene>
<keyword id="KW-0007">Acetylation</keyword>
<keyword id="KW-0025">Alternative splicing</keyword>
<keyword id="KW-0903">Direct protein sequencing</keyword>
<keyword id="KW-0238">DNA-binding</keyword>
<keyword id="KW-1017">Isopeptide bond</keyword>
<keyword id="KW-0539">Nucleus</keyword>
<keyword id="KW-0597">Phosphoprotein</keyword>
<keyword id="KW-1267">Proteomics identification</keyword>
<keyword id="KW-1185">Reference proteome</keyword>
<keyword id="KW-0677">Repeat</keyword>
<keyword id="KW-0804">Transcription</keyword>
<keyword id="KW-0805">Transcription regulation</keyword>
<keyword id="KW-0832">Ubl conjugation</keyword>
<name>FUBP3_HUMAN</name>
<accession>Q96I24</accession>
<accession>A3KFK8</accession>
<accession>A3KFL0</accession>
<accession>Q92946</accession>
<accession>Q9BVB6</accession>
<reference key="1">
    <citation type="journal article" date="1996" name="J. Biol. Chem.">
        <title>The far upstream element-binding proteins comprise an ancient family of single-strand DNA-binding transactivators.</title>
        <authorList>
            <person name="Davis-Smyth T."/>
            <person name="Duncan R.C."/>
            <person name="Zheng T."/>
            <person name="Michelotti G."/>
            <person name="Levens D."/>
        </authorList>
    </citation>
    <scope>NUCLEOTIDE SEQUENCE [MRNA] (ISOFORM 1)</scope>
</reference>
<reference key="2">
    <citation type="journal article" date="2004" name="Nat. Genet.">
        <title>Complete sequencing and characterization of 21,243 full-length human cDNAs.</title>
        <authorList>
            <person name="Ota T."/>
            <person name="Suzuki Y."/>
            <person name="Nishikawa T."/>
            <person name="Otsuki T."/>
            <person name="Sugiyama T."/>
            <person name="Irie R."/>
            <person name="Wakamatsu A."/>
            <person name="Hayashi K."/>
            <person name="Sato H."/>
            <person name="Nagai K."/>
            <person name="Kimura K."/>
            <person name="Makita H."/>
            <person name="Sekine M."/>
            <person name="Obayashi M."/>
            <person name="Nishi T."/>
            <person name="Shibahara T."/>
            <person name="Tanaka T."/>
            <person name="Ishii S."/>
            <person name="Yamamoto J."/>
            <person name="Saito K."/>
            <person name="Kawai Y."/>
            <person name="Isono Y."/>
            <person name="Nakamura Y."/>
            <person name="Nagahari K."/>
            <person name="Murakami K."/>
            <person name="Yasuda T."/>
            <person name="Iwayanagi T."/>
            <person name="Wagatsuma M."/>
            <person name="Shiratori A."/>
            <person name="Sudo H."/>
            <person name="Hosoiri T."/>
            <person name="Kaku Y."/>
            <person name="Kodaira H."/>
            <person name="Kondo H."/>
            <person name="Sugawara M."/>
            <person name="Takahashi M."/>
            <person name="Kanda K."/>
            <person name="Yokoi T."/>
            <person name="Furuya T."/>
            <person name="Kikkawa E."/>
            <person name="Omura Y."/>
            <person name="Abe K."/>
            <person name="Kamihara K."/>
            <person name="Katsuta N."/>
            <person name="Sato K."/>
            <person name="Tanikawa M."/>
            <person name="Yamazaki M."/>
            <person name="Ninomiya K."/>
            <person name="Ishibashi T."/>
            <person name="Yamashita H."/>
            <person name="Murakawa K."/>
            <person name="Fujimori K."/>
            <person name="Tanai H."/>
            <person name="Kimata M."/>
            <person name="Watanabe M."/>
            <person name="Hiraoka S."/>
            <person name="Chiba Y."/>
            <person name="Ishida S."/>
            <person name="Ono Y."/>
            <person name="Takiguchi S."/>
            <person name="Watanabe S."/>
            <person name="Yosida M."/>
            <person name="Hotuta T."/>
            <person name="Kusano J."/>
            <person name="Kanehori K."/>
            <person name="Takahashi-Fujii A."/>
            <person name="Hara H."/>
            <person name="Tanase T.-O."/>
            <person name="Nomura Y."/>
            <person name="Togiya S."/>
            <person name="Komai F."/>
            <person name="Hara R."/>
            <person name="Takeuchi K."/>
            <person name="Arita M."/>
            <person name="Imose N."/>
            <person name="Musashino K."/>
            <person name="Yuuki H."/>
            <person name="Oshima A."/>
            <person name="Sasaki N."/>
            <person name="Aotsuka S."/>
            <person name="Yoshikawa Y."/>
            <person name="Matsunawa H."/>
            <person name="Ichihara T."/>
            <person name="Shiohata N."/>
            <person name="Sano S."/>
            <person name="Moriya S."/>
            <person name="Momiyama H."/>
            <person name="Satoh N."/>
            <person name="Takami S."/>
            <person name="Terashima Y."/>
            <person name="Suzuki O."/>
            <person name="Nakagawa S."/>
            <person name="Senoh A."/>
            <person name="Mizoguchi H."/>
            <person name="Goto Y."/>
            <person name="Shimizu F."/>
            <person name="Wakebe H."/>
            <person name="Hishigaki H."/>
            <person name="Watanabe T."/>
            <person name="Sugiyama A."/>
            <person name="Takemoto M."/>
            <person name="Kawakami B."/>
            <person name="Yamazaki M."/>
            <person name="Watanabe K."/>
            <person name="Kumagai A."/>
            <person name="Itakura S."/>
            <person name="Fukuzumi Y."/>
            <person name="Fujimori Y."/>
            <person name="Komiyama M."/>
            <person name="Tashiro H."/>
            <person name="Tanigami A."/>
            <person name="Fujiwara T."/>
            <person name="Ono T."/>
            <person name="Yamada K."/>
            <person name="Fujii Y."/>
            <person name="Ozaki K."/>
            <person name="Hirao M."/>
            <person name="Ohmori Y."/>
            <person name="Kawabata A."/>
            <person name="Hikiji T."/>
            <person name="Kobatake N."/>
            <person name="Inagaki H."/>
            <person name="Ikema Y."/>
            <person name="Okamoto S."/>
            <person name="Okitani R."/>
            <person name="Kawakami T."/>
            <person name="Noguchi S."/>
            <person name="Itoh T."/>
            <person name="Shigeta K."/>
            <person name="Senba T."/>
            <person name="Matsumura K."/>
            <person name="Nakajima Y."/>
            <person name="Mizuno T."/>
            <person name="Morinaga M."/>
            <person name="Sasaki M."/>
            <person name="Togashi T."/>
            <person name="Oyama M."/>
            <person name="Hata H."/>
            <person name="Watanabe M."/>
            <person name="Komatsu T."/>
            <person name="Mizushima-Sugano J."/>
            <person name="Satoh T."/>
            <person name="Shirai Y."/>
            <person name="Takahashi Y."/>
            <person name="Nakagawa K."/>
            <person name="Okumura K."/>
            <person name="Nagase T."/>
            <person name="Nomura N."/>
            <person name="Kikuchi H."/>
            <person name="Masuho Y."/>
            <person name="Yamashita R."/>
            <person name="Nakai K."/>
            <person name="Yada T."/>
            <person name="Nakamura Y."/>
            <person name="Ohara O."/>
            <person name="Isogai T."/>
            <person name="Sugano S."/>
        </authorList>
    </citation>
    <scope>NUCLEOTIDE SEQUENCE [LARGE SCALE MRNA] (ISOFORM 1)</scope>
    <source>
        <tissue>Brain</tissue>
    </source>
</reference>
<reference key="3">
    <citation type="journal article" date="2004" name="Nature">
        <title>DNA sequence and analysis of human chromosome 9.</title>
        <authorList>
            <person name="Humphray S.J."/>
            <person name="Oliver K."/>
            <person name="Hunt A.R."/>
            <person name="Plumb R.W."/>
            <person name="Loveland J.E."/>
            <person name="Howe K.L."/>
            <person name="Andrews T.D."/>
            <person name="Searle S."/>
            <person name="Hunt S.E."/>
            <person name="Scott C.E."/>
            <person name="Jones M.C."/>
            <person name="Ainscough R."/>
            <person name="Almeida J.P."/>
            <person name="Ambrose K.D."/>
            <person name="Ashwell R.I.S."/>
            <person name="Babbage A.K."/>
            <person name="Babbage S."/>
            <person name="Bagguley C.L."/>
            <person name="Bailey J."/>
            <person name="Banerjee R."/>
            <person name="Barker D.J."/>
            <person name="Barlow K.F."/>
            <person name="Bates K."/>
            <person name="Beasley H."/>
            <person name="Beasley O."/>
            <person name="Bird C.P."/>
            <person name="Bray-Allen S."/>
            <person name="Brown A.J."/>
            <person name="Brown J.Y."/>
            <person name="Burford D."/>
            <person name="Burrill W."/>
            <person name="Burton J."/>
            <person name="Carder C."/>
            <person name="Carter N.P."/>
            <person name="Chapman J.C."/>
            <person name="Chen Y."/>
            <person name="Clarke G."/>
            <person name="Clark S.Y."/>
            <person name="Clee C.M."/>
            <person name="Clegg S."/>
            <person name="Collier R.E."/>
            <person name="Corby N."/>
            <person name="Crosier M."/>
            <person name="Cummings A.T."/>
            <person name="Davies J."/>
            <person name="Dhami P."/>
            <person name="Dunn M."/>
            <person name="Dutta I."/>
            <person name="Dyer L.W."/>
            <person name="Earthrowl M.E."/>
            <person name="Faulkner L."/>
            <person name="Fleming C.J."/>
            <person name="Frankish A."/>
            <person name="Frankland J.A."/>
            <person name="French L."/>
            <person name="Fricker D.G."/>
            <person name="Garner P."/>
            <person name="Garnett J."/>
            <person name="Ghori J."/>
            <person name="Gilbert J.G.R."/>
            <person name="Glison C."/>
            <person name="Grafham D.V."/>
            <person name="Gribble S."/>
            <person name="Griffiths C."/>
            <person name="Griffiths-Jones S."/>
            <person name="Grocock R."/>
            <person name="Guy J."/>
            <person name="Hall R.E."/>
            <person name="Hammond S."/>
            <person name="Harley J.L."/>
            <person name="Harrison E.S.I."/>
            <person name="Hart E.A."/>
            <person name="Heath P.D."/>
            <person name="Henderson C.D."/>
            <person name="Hopkins B.L."/>
            <person name="Howard P.J."/>
            <person name="Howden P.J."/>
            <person name="Huckle E."/>
            <person name="Johnson C."/>
            <person name="Johnson D."/>
            <person name="Joy A.A."/>
            <person name="Kay M."/>
            <person name="Keenan S."/>
            <person name="Kershaw J.K."/>
            <person name="Kimberley A.M."/>
            <person name="King A."/>
            <person name="Knights A."/>
            <person name="Laird G.K."/>
            <person name="Langford C."/>
            <person name="Lawlor S."/>
            <person name="Leongamornlert D.A."/>
            <person name="Leversha M."/>
            <person name="Lloyd C."/>
            <person name="Lloyd D.M."/>
            <person name="Lovell J."/>
            <person name="Martin S."/>
            <person name="Mashreghi-Mohammadi M."/>
            <person name="Matthews L."/>
            <person name="McLaren S."/>
            <person name="McLay K.E."/>
            <person name="McMurray A."/>
            <person name="Milne S."/>
            <person name="Nickerson T."/>
            <person name="Nisbett J."/>
            <person name="Nordsiek G."/>
            <person name="Pearce A.V."/>
            <person name="Peck A.I."/>
            <person name="Porter K.M."/>
            <person name="Pandian R."/>
            <person name="Pelan S."/>
            <person name="Phillimore B."/>
            <person name="Povey S."/>
            <person name="Ramsey Y."/>
            <person name="Rand V."/>
            <person name="Scharfe M."/>
            <person name="Sehra H.K."/>
            <person name="Shownkeen R."/>
            <person name="Sims S.K."/>
            <person name="Skuce C.D."/>
            <person name="Smith M."/>
            <person name="Steward C.A."/>
            <person name="Swarbreck D."/>
            <person name="Sycamore N."/>
            <person name="Tester J."/>
            <person name="Thorpe A."/>
            <person name="Tracey A."/>
            <person name="Tromans A."/>
            <person name="Thomas D.W."/>
            <person name="Wall M."/>
            <person name="Wallis J.M."/>
            <person name="West A.P."/>
            <person name="Whitehead S.L."/>
            <person name="Willey D.L."/>
            <person name="Williams S.A."/>
            <person name="Wilming L."/>
            <person name="Wray P.W."/>
            <person name="Young L."/>
            <person name="Ashurst J.L."/>
            <person name="Coulson A."/>
            <person name="Blocker H."/>
            <person name="Durbin R.M."/>
            <person name="Sulston J.E."/>
            <person name="Hubbard T."/>
            <person name="Jackson M.J."/>
            <person name="Bentley D.R."/>
            <person name="Beck S."/>
            <person name="Rogers J."/>
            <person name="Dunham I."/>
        </authorList>
    </citation>
    <scope>NUCLEOTIDE SEQUENCE [LARGE SCALE GENOMIC DNA]</scope>
</reference>
<reference key="4">
    <citation type="submission" date="2005-07" db="EMBL/GenBank/DDBJ databases">
        <authorList>
            <person name="Mural R.J."/>
            <person name="Istrail S."/>
            <person name="Sutton G."/>
            <person name="Florea L."/>
            <person name="Halpern A.L."/>
            <person name="Mobarry C.M."/>
            <person name="Lippert R."/>
            <person name="Walenz B."/>
            <person name="Shatkay H."/>
            <person name="Dew I."/>
            <person name="Miller J.R."/>
            <person name="Flanigan M.J."/>
            <person name="Edwards N.J."/>
            <person name="Bolanos R."/>
            <person name="Fasulo D."/>
            <person name="Halldorsson B.V."/>
            <person name="Hannenhalli S."/>
            <person name="Turner R."/>
            <person name="Yooseph S."/>
            <person name="Lu F."/>
            <person name="Nusskern D.R."/>
            <person name="Shue B.C."/>
            <person name="Zheng X.H."/>
            <person name="Zhong F."/>
            <person name="Delcher A.L."/>
            <person name="Huson D.H."/>
            <person name="Kravitz S.A."/>
            <person name="Mouchard L."/>
            <person name="Reinert K."/>
            <person name="Remington K.A."/>
            <person name="Clark A.G."/>
            <person name="Waterman M.S."/>
            <person name="Eichler E.E."/>
            <person name="Adams M.D."/>
            <person name="Hunkapiller M.W."/>
            <person name="Myers E.W."/>
            <person name="Venter J.C."/>
        </authorList>
    </citation>
    <scope>NUCLEOTIDE SEQUENCE [LARGE SCALE GENOMIC DNA]</scope>
</reference>
<reference key="5">
    <citation type="journal article" date="2004" name="Genome Res.">
        <title>The status, quality, and expansion of the NIH full-length cDNA project: the Mammalian Gene Collection (MGC).</title>
        <authorList>
            <consortium name="The MGC Project Team"/>
        </authorList>
    </citation>
    <scope>NUCLEOTIDE SEQUENCE [LARGE SCALE MRNA] (ISOFORMS 1 AND 2)</scope>
    <source>
        <tissue>Cervix</tissue>
        <tissue>Placenta</tissue>
    </source>
</reference>
<reference key="6">
    <citation type="submission" date="2008-12" db="UniProtKB">
        <authorList>
            <person name="Bienvenut W.V."/>
            <person name="Vousden K.H."/>
            <person name="Lukashchuk N."/>
            <person name="Lilla S."/>
            <person name="von Kriegsheim A."/>
            <person name="Lempens A."/>
            <person name="Kolch W."/>
        </authorList>
    </citation>
    <scope>PROTEIN SEQUENCE OF 2-15; 88-95; 226-233; 251-271; 287-299; 328-337; 393-403 AND 409-418</scope>
    <scope>CLEAVAGE OF INITIATOR METHIONINE</scope>
    <scope>ACETYLATION AT ALA-2</scope>
    <scope>IDENTIFICATION BY MASS SPECTROMETRY</scope>
    <source>
        <tissue>Lung carcinoma</tissue>
        <tissue>Ovarian carcinoma</tissue>
    </source>
</reference>
<reference key="7">
    <citation type="submission" date="2008-12" db="UniProtKB">
        <authorList>
            <person name="Lubec G."/>
            <person name="Chen W.-Q."/>
            <person name="Sun Y."/>
        </authorList>
    </citation>
    <scope>PROTEIN SEQUENCE OF 226-233 AND 263-271</scope>
    <scope>IDENTIFICATION BY MASS SPECTROMETRY</scope>
    <source>
        <tissue>Fetal brain cortex</tissue>
    </source>
</reference>
<reference key="8">
    <citation type="journal article" date="2006" name="Cell">
        <title>Global, in vivo, and site-specific phosphorylation dynamics in signaling networks.</title>
        <authorList>
            <person name="Olsen J.V."/>
            <person name="Blagoev B."/>
            <person name="Gnad F."/>
            <person name="Macek B."/>
            <person name="Kumar C."/>
            <person name="Mortensen P."/>
            <person name="Mann M."/>
        </authorList>
    </citation>
    <scope>IDENTIFICATION BY MASS SPECTROMETRY [LARGE SCALE ANALYSIS]</scope>
    <source>
        <tissue>Cervix carcinoma</tissue>
    </source>
</reference>
<reference key="9">
    <citation type="journal article" date="2007" name="Science">
        <title>ATM and ATR substrate analysis reveals extensive protein networks responsive to DNA damage.</title>
        <authorList>
            <person name="Matsuoka S."/>
            <person name="Ballif B.A."/>
            <person name="Smogorzewska A."/>
            <person name="McDonald E.R. III"/>
            <person name="Hurov K.E."/>
            <person name="Luo J."/>
            <person name="Bakalarski C.E."/>
            <person name="Zhao Z."/>
            <person name="Solimini N."/>
            <person name="Lerenthal Y."/>
            <person name="Shiloh Y."/>
            <person name="Gygi S.P."/>
            <person name="Elledge S.J."/>
        </authorList>
    </citation>
    <scope>PHOSPHORYLATION [LARGE SCALE ANALYSIS] AT SER-569</scope>
    <scope>IDENTIFICATION BY MASS SPECTROMETRY [LARGE SCALE ANALYSIS]</scope>
    <source>
        <tissue>Embryonic kidney</tissue>
    </source>
</reference>
<reference key="10">
    <citation type="journal article" date="2008" name="Proc. Natl. Acad. Sci. U.S.A.">
        <title>A quantitative atlas of mitotic phosphorylation.</title>
        <authorList>
            <person name="Dephoure N."/>
            <person name="Zhou C."/>
            <person name="Villen J."/>
            <person name="Beausoleil S.A."/>
            <person name="Bakalarski C.E."/>
            <person name="Elledge S.J."/>
            <person name="Gygi S.P."/>
        </authorList>
    </citation>
    <scope>IDENTIFICATION BY MASS SPECTROMETRY [LARGE SCALE ANALYSIS]</scope>
    <source>
        <tissue>Cervix carcinoma</tissue>
    </source>
</reference>
<reference key="11">
    <citation type="journal article" date="2009" name="Anal. Chem.">
        <title>Lys-N and trypsin cover complementary parts of the phosphoproteome in a refined SCX-based approach.</title>
        <authorList>
            <person name="Gauci S."/>
            <person name="Helbig A.O."/>
            <person name="Slijper M."/>
            <person name="Krijgsveld J."/>
            <person name="Heck A.J."/>
            <person name="Mohammed S."/>
        </authorList>
    </citation>
    <scope>ACETYLATION [LARGE SCALE ANALYSIS] AT ALA-2</scope>
    <scope>CLEAVAGE OF INITIATOR METHIONINE [LARGE SCALE ANALYSIS]</scope>
    <scope>IDENTIFICATION BY MASS SPECTROMETRY [LARGE SCALE ANALYSIS]</scope>
</reference>
<reference key="12">
    <citation type="journal article" date="2009" name="Mol. Cell. Proteomics">
        <title>Large-scale proteomics analysis of the human kinome.</title>
        <authorList>
            <person name="Oppermann F.S."/>
            <person name="Gnad F."/>
            <person name="Olsen J.V."/>
            <person name="Hornberger R."/>
            <person name="Greff Z."/>
            <person name="Keri G."/>
            <person name="Mann M."/>
            <person name="Daub H."/>
        </authorList>
    </citation>
    <scope>PHOSPHORYLATION [LARGE SCALE ANALYSIS] AT SER-296</scope>
    <scope>IDENTIFICATION BY MASS SPECTROMETRY [LARGE SCALE ANALYSIS]</scope>
</reference>
<reference key="13">
    <citation type="journal article" date="2009" name="Sci. Signal.">
        <title>Quantitative phosphoproteomic analysis of T cell receptor signaling reveals system-wide modulation of protein-protein interactions.</title>
        <authorList>
            <person name="Mayya V."/>
            <person name="Lundgren D.H."/>
            <person name="Hwang S.-I."/>
            <person name="Rezaul K."/>
            <person name="Wu L."/>
            <person name="Eng J.K."/>
            <person name="Rodionov V."/>
            <person name="Han D.K."/>
        </authorList>
    </citation>
    <scope>PHOSPHORYLATION [LARGE SCALE ANALYSIS] AT SER-569</scope>
    <scope>IDENTIFICATION BY MASS SPECTROMETRY [LARGE SCALE ANALYSIS]</scope>
    <source>
        <tissue>Leukemic T-cell</tissue>
    </source>
</reference>
<reference key="14">
    <citation type="journal article" date="2010" name="Sci. Signal.">
        <title>Quantitative phosphoproteomics reveals widespread full phosphorylation site occupancy during mitosis.</title>
        <authorList>
            <person name="Olsen J.V."/>
            <person name="Vermeulen M."/>
            <person name="Santamaria A."/>
            <person name="Kumar C."/>
            <person name="Miller M.L."/>
            <person name="Jensen L.J."/>
            <person name="Gnad F."/>
            <person name="Cox J."/>
            <person name="Jensen T.S."/>
            <person name="Nigg E.A."/>
            <person name="Brunak S."/>
            <person name="Mann M."/>
        </authorList>
    </citation>
    <scope>PHOSPHORYLATION [LARGE SCALE ANALYSIS] AT THR-76; SER-296; SER-539 AND SER-569</scope>
    <scope>IDENTIFICATION BY MASS SPECTROMETRY [LARGE SCALE ANALYSIS]</scope>
    <source>
        <tissue>Cervix carcinoma</tissue>
    </source>
</reference>
<reference key="15">
    <citation type="journal article" date="2011" name="BMC Syst. Biol.">
        <title>Initial characterization of the human central proteome.</title>
        <authorList>
            <person name="Burkard T.R."/>
            <person name="Planyavsky M."/>
            <person name="Kaupe I."/>
            <person name="Breitwieser F.P."/>
            <person name="Buerckstuemmer T."/>
            <person name="Bennett K.L."/>
            <person name="Superti-Furga G."/>
            <person name="Colinge J."/>
        </authorList>
    </citation>
    <scope>IDENTIFICATION BY MASS SPECTROMETRY [LARGE SCALE ANALYSIS]</scope>
</reference>
<reference key="16">
    <citation type="journal article" date="2011" name="Sci. Signal.">
        <title>System-wide temporal characterization of the proteome and phosphoproteome of human embryonic stem cell differentiation.</title>
        <authorList>
            <person name="Rigbolt K.T."/>
            <person name="Prokhorova T.A."/>
            <person name="Akimov V."/>
            <person name="Henningsen J."/>
            <person name="Johansen P.T."/>
            <person name="Kratchmarova I."/>
            <person name="Kassem M."/>
            <person name="Mann M."/>
            <person name="Olsen J.V."/>
            <person name="Blagoev B."/>
        </authorList>
    </citation>
    <scope>IDENTIFICATION BY MASS SPECTROMETRY [LARGE SCALE ANALYSIS]</scope>
</reference>
<reference key="17">
    <citation type="journal article" date="2012" name="Mol. Cell. Proteomics">
        <title>Comparative large-scale characterisation of plant vs. mammal proteins reveals similar and idiosyncratic N-alpha acetylation features.</title>
        <authorList>
            <person name="Bienvenut W.V."/>
            <person name="Sumpton D."/>
            <person name="Martinez A."/>
            <person name="Lilla S."/>
            <person name="Espagne C."/>
            <person name="Meinnel T."/>
            <person name="Giglione C."/>
        </authorList>
    </citation>
    <scope>ACETYLATION [LARGE SCALE ANALYSIS] AT ALA-2</scope>
    <scope>CLEAVAGE OF INITIATOR METHIONINE [LARGE SCALE ANALYSIS]</scope>
    <scope>IDENTIFICATION BY MASS SPECTROMETRY [LARGE SCALE ANALYSIS]</scope>
</reference>
<reference key="18">
    <citation type="journal article" date="2013" name="J. Proteome Res.">
        <title>Toward a comprehensive characterization of a human cancer cell phosphoproteome.</title>
        <authorList>
            <person name="Zhou H."/>
            <person name="Di Palma S."/>
            <person name="Preisinger C."/>
            <person name="Peng M."/>
            <person name="Polat A.N."/>
            <person name="Heck A.J."/>
            <person name="Mohammed S."/>
        </authorList>
    </citation>
    <scope>PHOSPHORYLATION [LARGE SCALE ANALYSIS] AT THR-76; SER-296 AND SER-569</scope>
    <scope>IDENTIFICATION BY MASS SPECTROMETRY [LARGE SCALE ANALYSIS]</scope>
    <source>
        <tissue>Cervix carcinoma</tissue>
        <tissue>Erythroleukemia</tissue>
    </source>
</reference>
<reference key="19">
    <citation type="journal article" date="2014" name="J. Proteomics">
        <title>An enzyme assisted RP-RPLC approach for in-depth analysis of human liver phosphoproteome.</title>
        <authorList>
            <person name="Bian Y."/>
            <person name="Song C."/>
            <person name="Cheng K."/>
            <person name="Dong M."/>
            <person name="Wang F."/>
            <person name="Huang J."/>
            <person name="Sun D."/>
            <person name="Wang L."/>
            <person name="Ye M."/>
            <person name="Zou H."/>
        </authorList>
    </citation>
    <scope>PHOSPHORYLATION [LARGE SCALE ANALYSIS] AT SER-296</scope>
    <scope>IDENTIFICATION BY MASS SPECTROMETRY [LARGE SCALE ANALYSIS]</scope>
    <source>
        <tissue>Liver</tissue>
    </source>
</reference>
<reference key="20">
    <citation type="journal article" date="2014" name="Nat. Struct. Mol. Biol.">
        <title>Uncovering global SUMOylation signaling networks in a site-specific manner.</title>
        <authorList>
            <person name="Hendriks I.A."/>
            <person name="D'Souza R.C."/>
            <person name="Yang B."/>
            <person name="Verlaan-de Vries M."/>
            <person name="Mann M."/>
            <person name="Vertegaal A.C."/>
        </authorList>
    </citation>
    <scope>SUMOYLATION [LARGE SCALE ANALYSIS] AT LYS-15</scope>
    <scope>IDENTIFICATION BY MASS SPECTROMETRY [LARGE SCALE ANALYSIS]</scope>
</reference>
<reference key="21">
    <citation type="journal article" date="2017" name="Nat. Struct. Mol. Biol.">
        <title>Site-specific mapping of the human SUMO proteome reveals co-modification with phosphorylation.</title>
        <authorList>
            <person name="Hendriks I.A."/>
            <person name="Lyon D."/>
            <person name="Young C."/>
            <person name="Jensen L.J."/>
            <person name="Vertegaal A.C."/>
            <person name="Nielsen M.L."/>
        </authorList>
    </citation>
    <scope>SUMOYLATION [LARGE SCALE ANALYSIS] AT LYS-15 AND LYS-57</scope>
    <scope>IDENTIFICATION BY MASS SPECTROMETRY [LARGE SCALE ANALYSIS]</scope>
</reference>
<sequence length="572" mass="61640">MAELVQGQSAPVGMKAEGFVDALHRVRQIAAKIDSIPHLNNSTPLVDPSVYGYGVQKRPLDDGVGNQLGALVHQRTVITEEFKVPDKMVGFIIGRGGEQISRIQAESGCKIQIASESSGIPERPCVLTGTPESIEQAKRLLGQIVDRCRNGPGFHNDIDSNSTIQEILIPASKVGLVIGRGGETIKQLQERTGVKMVMIQDGPLPTGADKPLRITGDAFKVQQAREMVLEIIREKDQADFRGVRGDFNSRMGGGSIEVSVPRFAVGIVIGRNGEMIKKIQNDAGVRIQFKPDDGISPERAAQVMGPPDRCQHAAHIISELILTAQERDGFGGLAAARGRGRGRGDWSVGAPGGVQEITYTVPADKCGLVIGKGGENIKSINQQSGAHVELQRNPPPNSDPNLRRFTIRGVPQQIEVARQLIDEKVGGTNLGAPGAFGQSPFSQPPAPPHQNTFPPRSSGCFPNMAAKVNGNPHSTPVSGPPAFLTQGWGSTYQAWQQPTQQVPSQQSQPQSSQPNYSKAWEDYYKKQSHAASAAPQASSPPDYTMAWAEYYRQQVAFYGQTLGQAQAHSQEQ</sequence>
<comment type="function">
    <text>May interact with single-stranded DNA from the far-upstream element (FUSE). May activate gene expression.</text>
</comment>
<comment type="interaction">
    <interactant intactId="EBI-954200">
        <id>Q96I24</id>
    </interactant>
    <interactant intactId="EBI-945792">
        <id>Q96PU8</id>
        <label>QKI</label>
    </interactant>
    <organismsDiffer>false</organismsDiffer>
    <experiments>5</experiments>
</comment>
<comment type="interaction">
    <interactant intactId="EBI-12267436">
        <id>Q96I24-2</id>
    </interactant>
    <interactant intactId="EBI-11987469">
        <id>Q6ZRY4</id>
        <label>RBPMS2</label>
    </interactant>
    <organismsDiffer>false</organismsDiffer>
    <experiments>3</experiments>
</comment>
<comment type="subcellular location">
    <subcellularLocation>
        <location evidence="5">Nucleus</location>
    </subcellularLocation>
</comment>
<comment type="alternative products">
    <event type="alternative splicing"/>
    <isoform>
        <id>Q96I24-1</id>
        <name>1</name>
        <sequence type="displayed"/>
    </isoform>
    <isoform>
        <id>Q96I24-2</id>
        <name>2</name>
        <sequence type="described" ref="VSP_008323 VSP_008324"/>
    </isoform>
</comment>
<comment type="tissue specificity">
    <text>Detected in a number of cell lines.</text>
</comment>
<comment type="sequence caution" evidence="5">
    <conflict type="frameshift">
        <sequence resource="EMBL-CDS" id="AAC50893"/>
    </conflict>
</comment>
<comment type="sequence caution" evidence="5">
    <conflict type="frameshift">
        <sequence resource="EMBL-CDS" id="AAH01325"/>
    </conflict>
</comment>
<proteinExistence type="evidence at protein level"/>